<accession>B5BKH1</accession>
<proteinExistence type="inferred from homology"/>
<gene>
    <name evidence="1" type="primary">psd</name>
    <name type="ordered locus">SSPA3868</name>
</gene>
<evidence type="ECO:0000255" key="1">
    <source>
        <dbReference type="HAMAP-Rule" id="MF_00662"/>
    </source>
</evidence>
<evidence type="ECO:0000256" key="2">
    <source>
        <dbReference type="SAM" id="MobiDB-lite"/>
    </source>
</evidence>
<organism>
    <name type="scientific">Salmonella paratyphi A (strain AKU_12601)</name>
    <dbReference type="NCBI Taxonomy" id="554290"/>
    <lineage>
        <taxon>Bacteria</taxon>
        <taxon>Pseudomonadati</taxon>
        <taxon>Pseudomonadota</taxon>
        <taxon>Gammaproteobacteria</taxon>
        <taxon>Enterobacterales</taxon>
        <taxon>Enterobacteriaceae</taxon>
        <taxon>Salmonella</taxon>
    </lineage>
</organism>
<name>PSD_SALPK</name>
<comment type="function">
    <text evidence="1">Catalyzes the formation of phosphatidylethanolamine (PtdEtn) from phosphatidylserine (PtdSer).</text>
</comment>
<comment type="catalytic activity">
    <reaction evidence="1">
        <text>a 1,2-diacyl-sn-glycero-3-phospho-L-serine + H(+) = a 1,2-diacyl-sn-glycero-3-phosphoethanolamine + CO2</text>
        <dbReference type="Rhea" id="RHEA:20828"/>
        <dbReference type="ChEBI" id="CHEBI:15378"/>
        <dbReference type="ChEBI" id="CHEBI:16526"/>
        <dbReference type="ChEBI" id="CHEBI:57262"/>
        <dbReference type="ChEBI" id="CHEBI:64612"/>
        <dbReference type="EC" id="4.1.1.65"/>
    </reaction>
</comment>
<comment type="cofactor">
    <cofactor evidence="1">
        <name>pyruvate</name>
        <dbReference type="ChEBI" id="CHEBI:15361"/>
    </cofactor>
    <text evidence="1">Binds 1 pyruvoyl group covalently per subunit.</text>
</comment>
<comment type="pathway">
    <text evidence="1">Phospholipid metabolism; phosphatidylethanolamine biosynthesis; phosphatidylethanolamine from CDP-diacylglycerol: step 2/2.</text>
</comment>
<comment type="subunit">
    <text evidence="1">Heterodimer of a large membrane-associated beta subunit and a small pyruvoyl-containing alpha subunit.</text>
</comment>
<comment type="subcellular location">
    <subcellularLocation>
        <location evidence="1">Cell membrane</location>
        <topology evidence="1">Peripheral membrane protein</topology>
    </subcellularLocation>
</comment>
<comment type="PTM">
    <text evidence="1">Is synthesized initially as an inactive proenzyme. Formation of the active enzyme involves a self-maturation process in which the active site pyruvoyl group is generated from an internal serine residue via an autocatalytic post-translational modification. Two non-identical subunits are generated from the proenzyme in this reaction, and the pyruvate is formed at the N-terminus of the alpha chain, which is derived from the carboxyl end of the proenzyme. The autoendoproteolytic cleavage occurs by a canonical serine protease mechanism, in which the side chain hydroxyl group of the serine supplies its oxygen atom to form the C-terminus of the beta chain, while the remainder of the serine residue undergoes an oxidative deamination to produce ammonia and the pyruvoyl prosthetic group on the alpha chain. During this reaction, the Ser that is part of the protease active site of the proenzyme becomes the pyruvoyl prosthetic group, which constitutes an essential element of the active site of the mature decarboxylase.</text>
</comment>
<comment type="similarity">
    <text evidence="1">Belongs to the phosphatidylserine decarboxylase family. PSD-B subfamily. Prokaryotic type I sub-subfamily.</text>
</comment>
<keyword id="KW-1003">Cell membrane</keyword>
<keyword id="KW-0210">Decarboxylase</keyword>
<keyword id="KW-0444">Lipid biosynthesis</keyword>
<keyword id="KW-0443">Lipid metabolism</keyword>
<keyword id="KW-0456">Lyase</keyword>
<keyword id="KW-0472">Membrane</keyword>
<keyword id="KW-0594">Phospholipid biosynthesis</keyword>
<keyword id="KW-1208">Phospholipid metabolism</keyword>
<keyword id="KW-0670">Pyruvate</keyword>
<keyword id="KW-0865">Zymogen</keyword>
<dbReference type="EC" id="4.1.1.65" evidence="1"/>
<dbReference type="EMBL" id="FM200053">
    <property type="protein sequence ID" value="CAR62155.1"/>
    <property type="molecule type" value="Genomic_DNA"/>
</dbReference>
<dbReference type="SMR" id="B5BKH1"/>
<dbReference type="KEGG" id="sek:SSPA3868"/>
<dbReference type="HOGENOM" id="CLU_029061_4_1_6"/>
<dbReference type="UniPathway" id="UPA00558">
    <property type="reaction ID" value="UER00616"/>
</dbReference>
<dbReference type="Proteomes" id="UP000001869">
    <property type="component" value="Chromosome"/>
</dbReference>
<dbReference type="GO" id="GO:0005886">
    <property type="term" value="C:plasma membrane"/>
    <property type="evidence" value="ECO:0007669"/>
    <property type="project" value="UniProtKB-SubCell"/>
</dbReference>
<dbReference type="GO" id="GO:0004609">
    <property type="term" value="F:phosphatidylserine decarboxylase activity"/>
    <property type="evidence" value="ECO:0007669"/>
    <property type="project" value="UniProtKB-UniRule"/>
</dbReference>
<dbReference type="GO" id="GO:0006646">
    <property type="term" value="P:phosphatidylethanolamine biosynthetic process"/>
    <property type="evidence" value="ECO:0007669"/>
    <property type="project" value="UniProtKB-UniRule"/>
</dbReference>
<dbReference type="HAMAP" id="MF_00662">
    <property type="entry name" value="PS_decarb_PSD_B_type1"/>
    <property type="match status" value="1"/>
</dbReference>
<dbReference type="InterPro" id="IPR003817">
    <property type="entry name" value="PS_Dcarbxylase"/>
</dbReference>
<dbReference type="InterPro" id="IPR033177">
    <property type="entry name" value="PSD-B"/>
</dbReference>
<dbReference type="InterPro" id="IPR033178">
    <property type="entry name" value="PSD_type1_pro"/>
</dbReference>
<dbReference type="NCBIfam" id="TIGR00163">
    <property type="entry name" value="PS_decarb"/>
    <property type="match status" value="1"/>
</dbReference>
<dbReference type="PANTHER" id="PTHR10067">
    <property type="entry name" value="PHOSPHATIDYLSERINE DECARBOXYLASE"/>
    <property type="match status" value="1"/>
</dbReference>
<dbReference type="PANTHER" id="PTHR10067:SF6">
    <property type="entry name" value="PHOSPHATIDYLSERINE DECARBOXYLASE PROENZYME, MITOCHONDRIAL"/>
    <property type="match status" value="1"/>
</dbReference>
<dbReference type="Pfam" id="PF02666">
    <property type="entry name" value="PS_Dcarbxylase"/>
    <property type="match status" value="1"/>
</dbReference>
<reference key="1">
    <citation type="journal article" date="2009" name="BMC Genomics">
        <title>Pseudogene accumulation in the evolutionary histories of Salmonella enterica serovars Paratyphi A and Typhi.</title>
        <authorList>
            <person name="Holt K.E."/>
            <person name="Thomson N.R."/>
            <person name="Wain J."/>
            <person name="Langridge G.C."/>
            <person name="Hasan R."/>
            <person name="Bhutta Z.A."/>
            <person name="Quail M.A."/>
            <person name="Norbertczak H."/>
            <person name="Walker D."/>
            <person name="Simmonds M."/>
            <person name="White B."/>
            <person name="Bason N."/>
            <person name="Mungall K."/>
            <person name="Dougan G."/>
            <person name="Parkhill J."/>
        </authorList>
    </citation>
    <scope>NUCLEOTIDE SEQUENCE [LARGE SCALE GENOMIC DNA]</scope>
    <source>
        <strain>AKU_12601</strain>
    </source>
</reference>
<sequence length="322" mass="35888">MLNSFKLSLQYILPKLWLTRLAGWGASKRAGWLTKLVIDLFVKYYKVDMTEAQKPDTASYRTFNDFFVRPLRDDVRPLNTDPNILVMPADGVISQLGRIEEDKILQAKGHNYSLEALLAGNYLMADKFRNGTFVTTYLSPRDYHRVHMPCNGILREMIYVPGDLFSVNHLTAQNVPNLFARNERVICLFDTEFGPMAQILVGATIVGSIETVWAGTITPPREGIIKRWTWPEGEHEGSVALLKGQEMGRFKLGSTVINLFAPGKVNLIASLASLSVTKIGQPLATSTETFVAPEVEPAPLPAEEIKAEHDASPLVDNKKDDT</sequence>
<protein>
    <recommendedName>
        <fullName evidence="1">Phosphatidylserine decarboxylase proenzyme</fullName>
        <ecNumber evidence="1">4.1.1.65</ecNumber>
    </recommendedName>
    <component>
        <recommendedName>
            <fullName evidence="1">Phosphatidylserine decarboxylase alpha chain</fullName>
        </recommendedName>
    </component>
    <component>
        <recommendedName>
            <fullName evidence="1">Phosphatidylserine decarboxylase beta chain</fullName>
        </recommendedName>
    </component>
</protein>
<feature type="chain" id="PRO_1000131402" description="Phosphatidylserine decarboxylase beta chain" evidence="1">
    <location>
        <begin position="1"/>
        <end position="253"/>
    </location>
</feature>
<feature type="chain" id="PRO_1000131403" description="Phosphatidylserine decarboxylase alpha chain" evidence="1">
    <location>
        <begin position="254"/>
        <end position="322"/>
    </location>
</feature>
<feature type="region of interest" description="Disordered" evidence="2">
    <location>
        <begin position="296"/>
        <end position="322"/>
    </location>
</feature>
<feature type="compositionally biased region" description="Basic and acidic residues" evidence="2">
    <location>
        <begin position="303"/>
        <end position="322"/>
    </location>
</feature>
<feature type="active site" description="Charge relay system; for autoendoproteolytic cleavage activity" evidence="1">
    <location>
        <position position="90"/>
    </location>
</feature>
<feature type="active site" description="Charge relay system; for autoendoproteolytic cleavage activity" evidence="1">
    <location>
        <position position="147"/>
    </location>
</feature>
<feature type="active site" description="Charge relay system; for autoendoproteolytic cleavage activity" evidence="1">
    <location>
        <position position="254"/>
    </location>
</feature>
<feature type="active site" description="Schiff-base intermediate with substrate; via pyruvic acid; for decarboxylase activity" evidence="1">
    <location>
        <position position="254"/>
    </location>
</feature>
<feature type="site" description="Cleavage (non-hydrolytic); by autocatalysis" evidence="1">
    <location>
        <begin position="253"/>
        <end position="254"/>
    </location>
</feature>
<feature type="modified residue" description="Pyruvic acid (Ser); by autocatalysis" evidence="1">
    <location>
        <position position="254"/>
    </location>
</feature>